<protein>
    <recommendedName>
        <fullName evidence="1">Small ribosomal subunit protein bS21</fullName>
    </recommendedName>
    <alternativeName>
        <fullName evidence="3">30S ribosomal protein S21</fullName>
    </alternativeName>
</protein>
<accession>Q1IG32</accession>
<evidence type="ECO:0000255" key="1">
    <source>
        <dbReference type="HAMAP-Rule" id="MF_00358"/>
    </source>
</evidence>
<evidence type="ECO:0000256" key="2">
    <source>
        <dbReference type="SAM" id="MobiDB-lite"/>
    </source>
</evidence>
<evidence type="ECO:0000305" key="3"/>
<proteinExistence type="inferred from homology"/>
<dbReference type="EMBL" id="CT573326">
    <property type="protein sequence ID" value="CAK13370.1"/>
    <property type="molecule type" value="Genomic_DNA"/>
</dbReference>
<dbReference type="RefSeq" id="WP_003255575.1">
    <property type="nucleotide sequence ID" value="NC_008027.1"/>
</dbReference>
<dbReference type="SMR" id="Q1IG32"/>
<dbReference type="STRING" id="384676.PSEEN0416"/>
<dbReference type="GeneID" id="97165908"/>
<dbReference type="KEGG" id="pen:PSEEN0416"/>
<dbReference type="eggNOG" id="COG0828">
    <property type="taxonomic scope" value="Bacteria"/>
</dbReference>
<dbReference type="HOGENOM" id="CLU_159258_1_0_6"/>
<dbReference type="OrthoDB" id="9799244at2"/>
<dbReference type="Proteomes" id="UP000000658">
    <property type="component" value="Chromosome"/>
</dbReference>
<dbReference type="GO" id="GO:1990904">
    <property type="term" value="C:ribonucleoprotein complex"/>
    <property type="evidence" value="ECO:0007669"/>
    <property type="project" value="UniProtKB-KW"/>
</dbReference>
<dbReference type="GO" id="GO:0005840">
    <property type="term" value="C:ribosome"/>
    <property type="evidence" value="ECO:0007669"/>
    <property type="project" value="UniProtKB-KW"/>
</dbReference>
<dbReference type="GO" id="GO:0003735">
    <property type="term" value="F:structural constituent of ribosome"/>
    <property type="evidence" value="ECO:0007669"/>
    <property type="project" value="InterPro"/>
</dbReference>
<dbReference type="GO" id="GO:0006412">
    <property type="term" value="P:translation"/>
    <property type="evidence" value="ECO:0007669"/>
    <property type="project" value="UniProtKB-UniRule"/>
</dbReference>
<dbReference type="Gene3D" id="1.20.5.1150">
    <property type="entry name" value="Ribosomal protein S8"/>
    <property type="match status" value="1"/>
</dbReference>
<dbReference type="HAMAP" id="MF_00358">
    <property type="entry name" value="Ribosomal_bS21"/>
    <property type="match status" value="1"/>
</dbReference>
<dbReference type="InterPro" id="IPR001911">
    <property type="entry name" value="Ribosomal_bS21"/>
</dbReference>
<dbReference type="InterPro" id="IPR018278">
    <property type="entry name" value="Ribosomal_bS21_CS"/>
</dbReference>
<dbReference type="InterPro" id="IPR038380">
    <property type="entry name" value="Ribosomal_bS21_sf"/>
</dbReference>
<dbReference type="NCBIfam" id="TIGR00030">
    <property type="entry name" value="S21p"/>
    <property type="match status" value="1"/>
</dbReference>
<dbReference type="PANTHER" id="PTHR21109">
    <property type="entry name" value="MITOCHONDRIAL 28S RIBOSOMAL PROTEIN S21"/>
    <property type="match status" value="1"/>
</dbReference>
<dbReference type="PANTHER" id="PTHR21109:SF22">
    <property type="entry name" value="SMALL RIBOSOMAL SUBUNIT PROTEIN BS21"/>
    <property type="match status" value="1"/>
</dbReference>
<dbReference type="Pfam" id="PF01165">
    <property type="entry name" value="Ribosomal_S21"/>
    <property type="match status" value="1"/>
</dbReference>
<dbReference type="PRINTS" id="PR00976">
    <property type="entry name" value="RIBOSOMALS21"/>
</dbReference>
<dbReference type="PROSITE" id="PS01181">
    <property type="entry name" value="RIBOSOMAL_S21"/>
    <property type="match status" value="1"/>
</dbReference>
<comment type="similarity">
    <text evidence="1">Belongs to the bacterial ribosomal protein bS21 family.</text>
</comment>
<keyword id="KW-0687">Ribonucleoprotein</keyword>
<keyword id="KW-0689">Ribosomal protein</keyword>
<organism>
    <name type="scientific">Pseudomonas entomophila (strain L48)</name>
    <dbReference type="NCBI Taxonomy" id="384676"/>
    <lineage>
        <taxon>Bacteria</taxon>
        <taxon>Pseudomonadati</taxon>
        <taxon>Pseudomonadota</taxon>
        <taxon>Gammaproteobacteria</taxon>
        <taxon>Pseudomonadales</taxon>
        <taxon>Pseudomonadaceae</taxon>
        <taxon>Pseudomonas</taxon>
    </lineage>
</organism>
<gene>
    <name evidence="1" type="primary">rpsU</name>
    <name type="ordered locus">PSEEN0416</name>
</gene>
<name>RS21_PSEE4</name>
<sequence length="71" mass="8370">MPAVKVKENEPFDVALRRFKRSCEKAGVLAEVRSREFYEKPTAERKRKAAAAVKRHAKKVQREQRRAVRLY</sequence>
<feature type="chain" id="PRO_1000005156" description="Small ribosomal subunit protein bS21">
    <location>
        <begin position="1"/>
        <end position="71"/>
    </location>
</feature>
<feature type="region of interest" description="Disordered" evidence="2">
    <location>
        <begin position="50"/>
        <end position="71"/>
    </location>
</feature>
<feature type="compositionally biased region" description="Basic residues" evidence="2">
    <location>
        <begin position="50"/>
        <end position="59"/>
    </location>
</feature>
<feature type="compositionally biased region" description="Basic and acidic residues" evidence="2">
    <location>
        <begin position="60"/>
        <end position="71"/>
    </location>
</feature>
<reference key="1">
    <citation type="journal article" date="2006" name="Nat. Biotechnol.">
        <title>Complete genome sequence of the entomopathogenic and metabolically versatile soil bacterium Pseudomonas entomophila.</title>
        <authorList>
            <person name="Vodovar N."/>
            <person name="Vallenet D."/>
            <person name="Cruveiller S."/>
            <person name="Rouy Z."/>
            <person name="Barbe V."/>
            <person name="Acosta C."/>
            <person name="Cattolico L."/>
            <person name="Jubin C."/>
            <person name="Lajus A."/>
            <person name="Segurens B."/>
            <person name="Vacherie B."/>
            <person name="Wincker P."/>
            <person name="Weissenbach J."/>
            <person name="Lemaitre B."/>
            <person name="Medigue C."/>
            <person name="Boccard F."/>
        </authorList>
    </citation>
    <scope>NUCLEOTIDE SEQUENCE [LARGE SCALE GENOMIC DNA]</scope>
    <source>
        <strain>L48</strain>
    </source>
</reference>